<keyword id="KW-0002">3D-structure</keyword>
<keyword id="KW-0903">Direct protein sequencing</keyword>
<keyword id="KW-0479">Metal-binding</keyword>
<keyword id="KW-0520">NAD</keyword>
<keyword id="KW-0547">Nucleotide-binding</keyword>
<keyword id="KW-0560">Oxidoreductase</keyword>
<keyword id="KW-0576">Peroxisome</keyword>
<keyword id="KW-0915">Sodium</keyword>
<accession>Q93YB2</accession>
<sequence length="503" mass="54496">MDIPIPTRQLFINGDWKAPVLNKRIPVINPATQNIIGDIPAATKEDVDVAVAAAKTALTRNKGADWATASGAVRARYLRAIAAKVTEKKPELAKLESIDCGKPLDEAAWDIDDVAGCFEYYADLAEKLDARQKAPVSLPMDTFKSHVLREPIGVVGLITPWNYPMLMATWKVAPALAAGCAAILKPSELASLTCLELGEICKEVGLPPGVLNILTGLGPEAGAPLATHPDVDKVAFTGSSATGSKIMTAAAQLVKPVSLELGGKSPLVVFEDVDLDKAAEWAIFGCFWTNGQICSATSRLILHESIATEFLNRIVKWIKNIKISDPLEEGCRLGPVVSEGQYEKILKFVSNAKSEGATILTGGSRPEHLKKGFFIEPTIITDVTTNMQIWREEVFGPVLCVKTFSTEEEAIDLANDTVYGLGAAVISNDLERCERVTKAFKAGIVWVNCSQPCFTQAPWGGVKRSGFGRELGEWGLDNYLSVKQVTQYISEEPWGWYQPPAKL</sequence>
<protein>
    <recommendedName>
        <fullName evidence="8">Aminoaldehyde dehydrogenase 2, peroxisomal</fullName>
        <shortName evidence="8">PsAMADH2</shortName>
        <ecNumber evidence="5 6">1.2.1.-</ecNumber>
    </recommendedName>
    <alternativeName>
        <fullName evidence="10">Aminobutyraldehyde dehydrogenase AMADH2</fullName>
        <ecNumber evidence="5 6">1.2.1.19</ecNumber>
    </alternativeName>
    <alternativeName>
        <fullName evidence="10">Gamma-guanidinobutyraldehyde dehydrogenase AMADH2</fullName>
        <ecNumber evidence="5">1.2.1.54</ecNumber>
    </alternativeName>
</protein>
<feature type="chain" id="PRO_0000454134" description="Aminoaldehyde dehydrogenase 2, peroxisomal">
    <location>
        <begin position="1"/>
        <end position="503"/>
    </location>
</feature>
<feature type="short sequence motif" description="Microbody targeting signal" evidence="2">
    <location>
        <begin position="501"/>
        <end position="503"/>
    </location>
</feature>
<feature type="active site" description="Proton acceptor" evidence="3">
    <location>
        <position position="260"/>
    </location>
</feature>
<feature type="active site" description="Nucleophile" evidence="4">
    <location>
        <position position="294"/>
    </location>
</feature>
<feature type="binding site" evidence="5 11">
    <location>
        <position position="28"/>
    </location>
    <ligand>
        <name>Na(+)</name>
        <dbReference type="ChEBI" id="CHEBI:29101"/>
    </ligand>
</feature>
<feature type="binding site" evidence="5 11">
    <location>
        <position position="99"/>
    </location>
    <ligand>
        <name>Na(+)</name>
        <dbReference type="ChEBI" id="CHEBI:29101"/>
    </ligand>
</feature>
<feature type="binding site" evidence="5 11">
    <location>
        <position position="161"/>
    </location>
    <ligand>
        <name>NAD(+)</name>
        <dbReference type="ChEBI" id="CHEBI:57540"/>
    </ligand>
</feature>
<feature type="binding site" evidence="5 11">
    <location>
        <position position="185"/>
    </location>
    <ligand>
        <name>NAD(+)</name>
        <dbReference type="ChEBI" id="CHEBI:57540"/>
    </ligand>
</feature>
<feature type="binding site" evidence="5 11">
    <location>
        <position position="189"/>
    </location>
    <ligand>
        <name>Na(+)</name>
        <dbReference type="ChEBI" id="CHEBI:29101"/>
    </ligand>
</feature>
<feature type="binding site" evidence="5 11">
    <location>
        <position position="239"/>
    </location>
    <ligand>
        <name>NAD(+)</name>
        <dbReference type="ChEBI" id="CHEBI:57540"/>
    </ligand>
</feature>
<feature type="site" description="Transition state stabilizer" evidence="1">
    <location>
        <position position="162"/>
    </location>
</feature>
<feature type="strand" evidence="12">
    <location>
        <begin position="10"/>
        <end position="12"/>
    </location>
</feature>
<feature type="strand" evidence="12">
    <location>
        <begin position="15"/>
        <end position="17"/>
    </location>
</feature>
<feature type="strand" evidence="12">
    <location>
        <begin position="24"/>
        <end position="28"/>
    </location>
</feature>
<feature type="turn" evidence="12">
    <location>
        <begin position="30"/>
        <end position="32"/>
    </location>
</feature>
<feature type="strand" evidence="12">
    <location>
        <begin position="35"/>
        <end position="40"/>
    </location>
</feature>
<feature type="helix" evidence="12">
    <location>
        <begin position="44"/>
        <end position="59"/>
    </location>
</feature>
<feature type="helix" evidence="12">
    <location>
        <begin position="60"/>
        <end position="63"/>
    </location>
</feature>
<feature type="turn" evidence="12">
    <location>
        <begin position="64"/>
        <end position="67"/>
    </location>
</feature>
<feature type="helix" evidence="12">
    <location>
        <begin position="71"/>
        <end position="87"/>
    </location>
</feature>
<feature type="helix" evidence="12">
    <location>
        <begin position="89"/>
        <end position="100"/>
    </location>
</feature>
<feature type="helix" evidence="12">
    <location>
        <begin position="104"/>
        <end position="131"/>
    </location>
</feature>
<feature type="strand" evidence="12">
    <location>
        <begin position="134"/>
        <end position="136"/>
    </location>
</feature>
<feature type="strand" evidence="12">
    <location>
        <begin position="143"/>
        <end position="151"/>
    </location>
</feature>
<feature type="strand" evidence="12">
    <location>
        <begin position="154"/>
        <end position="158"/>
    </location>
</feature>
<feature type="strand" evidence="12">
    <location>
        <begin position="161"/>
        <end position="163"/>
    </location>
</feature>
<feature type="helix" evidence="12">
    <location>
        <begin position="164"/>
        <end position="177"/>
    </location>
</feature>
<feature type="strand" evidence="12">
    <location>
        <begin position="181"/>
        <end position="185"/>
    </location>
</feature>
<feature type="helix" evidence="12">
    <location>
        <begin position="192"/>
        <end position="204"/>
    </location>
</feature>
<feature type="strand" evidence="12">
    <location>
        <begin position="210"/>
        <end position="213"/>
    </location>
</feature>
<feature type="helix" evidence="12">
    <location>
        <begin position="218"/>
        <end position="221"/>
    </location>
</feature>
<feature type="helix" evidence="12">
    <location>
        <begin position="223"/>
        <end position="226"/>
    </location>
</feature>
<feature type="strand" evidence="12">
    <location>
        <begin position="233"/>
        <end position="238"/>
    </location>
</feature>
<feature type="helix" evidence="12">
    <location>
        <begin position="240"/>
        <end position="250"/>
    </location>
</feature>
<feature type="helix" evidence="12">
    <location>
        <begin position="251"/>
        <end position="253"/>
    </location>
</feature>
<feature type="strand" evidence="12">
    <location>
        <begin position="257"/>
        <end position="260"/>
    </location>
</feature>
<feature type="strand" evidence="12">
    <location>
        <begin position="265"/>
        <end position="269"/>
    </location>
</feature>
<feature type="strand" evidence="12">
    <location>
        <begin position="271"/>
        <end position="273"/>
    </location>
</feature>
<feature type="helix" evidence="12">
    <location>
        <begin position="275"/>
        <end position="286"/>
    </location>
</feature>
<feature type="helix" evidence="12">
    <location>
        <begin position="288"/>
        <end position="291"/>
    </location>
</feature>
<feature type="strand" evidence="12">
    <location>
        <begin position="297"/>
        <end position="303"/>
    </location>
</feature>
<feature type="turn" evidence="12">
    <location>
        <begin position="304"/>
        <end position="306"/>
    </location>
</feature>
<feature type="helix" evidence="12">
    <location>
        <begin position="307"/>
        <end position="319"/>
    </location>
</feature>
<feature type="helix" evidence="12">
    <location>
        <begin position="339"/>
        <end position="354"/>
    </location>
</feature>
<feature type="strand" evidence="12">
    <location>
        <begin position="358"/>
        <end position="361"/>
    </location>
</feature>
<feature type="strand" evidence="12">
    <location>
        <begin position="371"/>
        <end position="373"/>
    </location>
</feature>
<feature type="strand" evidence="12">
    <location>
        <begin position="378"/>
        <end position="382"/>
    </location>
</feature>
<feature type="helix" evidence="12">
    <location>
        <begin position="388"/>
        <end position="391"/>
    </location>
</feature>
<feature type="strand" evidence="12">
    <location>
        <begin position="396"/>
        <end position="406"/>
    </location>
</feature>
<feature type="helix" evidence="12">
    <location>
        <begin position="407"/>
        <end position="414"/>
    </location>
</feature>
<feature type="strand" evidence="12">
    <location>
        <begin position="421"/>
        <end position="426"/>
    </location>
</feature>
<feature type="helix" evidence="12">
    <location>
        <begin position="430"/>
        <end position="439"/>
    </location>
</feature>
<feature type="strand" evidence="12">
    <location>
        <begin position="442"/>
        <end position="450"/>
    </location>
</feature>
<feature type="helix" evidence="12">
    <location>
        <begin position="463"/>
        <end position="465"/>
    </location>
</feature>
<feature type="helix" evidence="12">
    <location>
        <begin position="472"/>
        <end position="477"/>
    </location>
</feature>
<feature type="strand" evidence="12">
    <location>
        <begin position="480"/>
        <end position="488"/>
    </location>
</feature>
<name>AADH2_PEA</name>
<evidence type="ECO:0000250" key="1">
    <source>
        <dbReference type="UniProtKB" id="P20000"/>
    </source>
</evidence>
<evidence type="ECO:0000255" key="2"/>
<evidence type="ECO:0000255" key="3">
    <source>
        <dbReference type="PROSITE-ProRule" id="PRU10007"/>
    </source>
</evidence>
<evidence type="ECO:0000255" key="4">
    <source>
        <dbReference type="PROSITE-ProRule" id="PRU10008"/>
    </source>
</evidence>
<evidence type="ECO:0000269" key="5">
    <source>
    </source>
</evidence>
<evidence type="ECO:0000269" key="6">
    <source>
    </source>
</evidence>
<evidence type="ECO:0000269" key="7">
    <source ref="1"/>
</evidence>
<evidence type="ECO:0000303" key="8">
    <source>
    </source>
</evidence>
<evidence type="ECO:0000303" key="9">
    <source ref="1"/>
</evidence>
<evidence type="ECO:0000305" key="10"/>
<evidence type="ECO:0007744" key="11">
    <source>
        <dbReference type="PDB" id="3IWJ"/>
    </source>
</evidence>
<evidence type="ECO:0007829" key="12">
    <source>
        <dbReference type="PDB" id="3IWJ"/>
    </source>
</evidence>
<organism>
    <name type="scientific">Pisum sativum</name>
    <name type="common">Garden pea</name>
    <name type="synonym">Lathyrus oleraceus</name>
    <dbReference type="NCBI Taxonomy" id="3888"/>
    <lineage>
        <taxon>Eukaryota</taxon>
        <taxon>Viridiplantae</taxon>
        <taxon>Streptophyta</taxon>
        <taxon>Embryophyta</taxon>
        <taxon>Tracheophyta</taxon>
        <taxon>Spermatophyta</taxon>
        <taxon>Magnoliopsida</taxon>
        <taxon>eudicotyledons</taxon>
        <taxon>Gunneridae</taxon>
        <taxon>Pentapetalae</taxon>
        <taxon>rosids</taxon>
        <taxon>fabids</taxon>
        <taxon>Fabales</taxon>
        <taxon>Fabaceae</taxon>
        <taxon>Papilionoideae</taxon>
        <taxon>50 kb inversion clade</taxon>
        <taxon>NPAAA clade</taxon>
        <taxon>Hologalegina</taxon>
        <taxon>IRL clade</taxon>
        <taxon>Fabeae</taxon>
        <taxon>Pisum</taxon>
    </lineage>
</organism>
<reference key="1">
    <citation type="journal article" date="2003" name="Plant Physiol. Biochem.">
        <title>Pea seedling aminoaldehyde dehydrogenase: primary structure and active site residues.</title>
        <authorList>
            <person name="Brauner F."/>
            <person name="Sebela M."/>
            <person name="Snegaroff J."/>
            <person name="Pec P."/>
            <person name="Meunier J.C."/>
        </authorList>
    </citation>
    <scope>NUCLEOTIDE SEQUENCE [MRNA]</scope>
    <scope>PROTEIN SEQUENCE OF 1-30</scope>
    <scope>FUNCTION</scope>
    <scope>CATALYTIC ACTIVITY</scope>
    <source>
        <tissue>Meristem</tissue>
    </source>
</reference>
<reference key="2">
    <citation type="journal article" date="2011" name="FEBS J.">
        <title>Carboxylate and aromatic active-site residues are determinants of high-affinity binding of omega-aminoaldehydes to plant aminoaldehyde dehydrogenases.</title>
        <authorList>
            <person name="Kopecny D."/>
            <person name="Tylichova M."/>
            <person name="Snegaroff J."/>
            <person name="Popelkova H."/>
            <person name="Sebela M."/>
        </authorList>
    </citation>
    <scope>FUNCTION</scope>
    <scope>CATALYTIC ACTIVITY</scope>
</reference>
<reference key="3">
    <citation type="journal article" date="2010" name="J. Mol. Biol.">
        <title>Structural and functional characterization of plant aminoaldehyde dehydrogenase from Pisum sativum with a broad specificity for natural and synthetic aminoaldehydes.</title>
        <authorList>
            <person name="Tylichova M."/>
            <person name="Kopecny D."/>
            <person name="Morera S."/>
            <person name="Briozzo P."/>
            <person name="Lenobel R."/>
            <person name="Snegaroff J."/>
            <person name="Sebela M."/>
        </authorList>
    </citation>
    <scope>X-RAY CRYSTALLOGRAPHY (2.15 ANGSTROMS) IN COMPLEX WITH NAD AND SODIUM ION</scope>
    <scope>FUNCTION</scope>
    <scope>CATALYTIC ACTIVITY</scope>
    <scope>BIOPHYSICOCHEMICAL PROPERTIES</scope>
    <scope>SUBUNIT</scope>
</reference>
<proteinExistence type="evidence at protein level"/>
<gene>
    <name evidence="9" type="primary">AMADH2</name>
</gene>
<dbReference type="EC" id="1.2.1.-" evidence="5 6"/>
<dbReference type="EC" id="1.2.1.19" evidence="5 6"/>
<dbReference type="EC" id="1.2.1.54" evidence="5"/>
<dbReference type="EMBL" id="AJ315853">
    <property type="protein sequence ID" value="CAC48393.2"/>
    <property type="molecule type" value="mRNA"/>
</dbReference>
<dbReference type="PDB" id="3IWJ">
    <property type="method" value="X-ray"/>
    <property type="resolution" value="2.15 A"/>
    <property type="chains" value="A/B=1-503"/>
</dbReference>
<dbReference type="PDBsum" id="3IWJ"/>
<dbReference type="SMR" id="Q93YB2"/>
<dbReference type="EnsemblPlants" id="Psat4g055120.1">
    <property type="protein sequence ID" value="Psat4g055120.1.cds"/>
    <property type="gene ID" value="Psat4g055120"/>
</dbReference>
<dbReference type="Gramene" id="Psat4g055120.1">
    <property type="protein sequence ID" value="Psat4g055120.1.cds"/>
    <property type="gene ID" value="Psat4g055120"/>
</dbReference>
<dbReference type="OrthoDB" id="310895at2759"/>
<dbReference type="BRENDA" id="1.2.1.19">
    <property type="organism ID" value="4872"/>
</dbReference>
<dbReference type="UniPathway" id="UPA00529">
    <property type="reaction ID" value="UER00386"/>
</dbReference>
<dbReference type="EvolutionaryTrace" id="Q93YB2"/>
<dbReference type="GO" id="GO:0005777">
    <property type="term" value="C:peroxisome"/>
    <property type="evidence" value="ECO:0007669"/>
    <property type="project" value="UniProtKB-SubCell"/>
</dbReference>
<dbReference type="GO" id="GO:0019145">
    <property type="term" value="F:aminobutyraldehyde dehydrogenase (NAD+) activity"/>
    <property type="evidence" value="ECO:0000314"/>
    <property type="project" value="UniProtKB"/>
</dbReference>
<dbReference type="GO" id="GO:0047107">
    <property type="term" value="F:gamma-guanidinobutyraldehyde dehydrogenase (NAD+) activity"/>
    <property type="evidence" value="ECO:0000314"/>
    <property type="project" value="UniProtKB"/>
</dbReference>
<dbReference type="GO" id="GO:0000166">
    <property type="term" value="F:nucleotide binding"/>
    <property type="evidence" value="ECO:0007669"/>
    <property type="project" value="UniProtKB-KW"/>
</dbReference>
<dbReference type="GO" id="GO:0042803">
    <property type="term" value="F:protein homodimerization activity"/>
    <property type="evidence" value="ECO:0000314"/>
    <property type="project" value="UniProtKB"/>
</dbReference>
<dbReference type="GO" id="GO:0031402">
    <property type="term" value="F:sodium ion binding"/>
    <property type="evidence" value="ECO:0000314"/>
    <property type="project" value="UniProtKB"/>
</dbReference>
<dbReference type="GO" id="GO:0110095">
    <property type="term" value="P:cellular detoxification of aldehyde"/>
    <property type="evidence" value="ECO:0000314"/>
    <property type="project" value="UniProtKB"/>
</dbReference>
<dbReference type="GO" id="GO:0019285">
    <property type="term" value="P:glycine betaine biosynthetic process from choline"/>
    <property type="evidence" value="ECO:0007669"/>
    <property type="project" value="UniProtKB-UniPathway"/>
</dbReference>
<dbReference type="CDD" id="cd07110">
    <property type="entry name" value="ALDH_F10_BADH"/>
    <property type="match status" value="1"/>
</dbReference>
<dbReference type="FunFam" id="3.40.309.10:FF:000012">
    <property type="entry name" value="Betaine aldehyde dehydrogenase"/>
    <property type="match status" value="1"/>
</dbReference>
<dbReference type="FunFam" id="3.40.605.10:FF:000007">
    <property type="entry name" value="NAD/NADP-dependent betaine aldehyde dehydrogenase"/>
    <property type="match status" value="1"/>
</dbReference>
<dbReference type="Gene3D" id="3.40.605.10">
    <property type="entry name" value="Aldehyde Dehydrogenase, Chain A, domain 1"/>
    <property type="match status" value="1"/>
</dbReference>
<dbReference type="Gene3D" id="3.40.309.10">
    <property type="entry name" value="Aldehyde Dehydrogenase, Chain A, domain 2"/>
    <property type="match status" value="1"/>
</dbReference>
<dbReference type="InterPro" id="IPR016161">
    <property type="entry name" value="Ald_DH/histidinol_DH"/>
</dbReference>
<dbReference type="InterPro" id="IPR016163">
    <property type="entry name" value="Ald_DH_C"/>
</dbReference>
<dbReference type="InterPro" id="IPR016160">
    <property type="entry name" value="Ald_DH_CS_CYS"/>
</dbReference>
<dbReference type="InterPro" id="IPR029510">
    <property type="entry name" value="Ald_DH_CS_GLU"/>
</dbReference>
<dbReference type="InterPro" id="IPR016162">
    <property type="entry name" value="Ald_DH_N"/>
</dbReference>
<dbReference type="InterPro" id="IPR015590">
    <property type="entry name" value="Aldehyde_DH_dom"/>
</dbReference>
<dbReference type="PANTHER" id="PTHR43860">
    <property type="entry name" value="BETAINE ALDEHYDE DEHYDROGENASE"/>
    <property type="match status" value="1"/>
</dbReference>
<dbReference type="PANTHER" id="PTHR43860:SF2">
    <property type="entry name" value="BETAINE ALDEHYDE DEHYDROGENASE-RELATED"/>
    <property type="match status" value="1"/>
</dbReference>
<dbReference type="Pfam" id="PF00171">
    <property type="entry name" value="Aldedh"/>
    <property type="match status" value="1"/>
</dbReference>
<dbReference type="SUPFAM" id="SSF53720">
    <property type="entry name" value="ALDH-like"/>
    <property type="match status" value="1"/>
</dbReference>
<dbReference type="PROSITE" id="PS00070">
    <property type="entry name" value="ALDEHYDE_DEHYDR_CYS"/>
    <property type="match status" value="1"/>
</dbReference>
<dbReference type="PROSITE" id="PS00687">
    <property type="entry name" value="ALDEHYDE_DEHYDR_GLU"/>
    <property type="match status" value="1"/>
</dbReference>
<comment type="function">
    <text evidence="5 6 7 10">Dehydrogenase that catalyzes the oxidation of several aminoaldehydes (PubMed:20026072). Metabolizes and detoxifies aldehyde products of polyamine degradation to non-toxic amino acids (Probable). Catalyzes the oxidation of 3-aminopropanal to beta-alanine (PubMed:20026072, PubMed:21740525, Ref.1). Catalyzes the oxidation of 4-aminobutanal to 4-aminobutanoate (PubMed:20026072, PubMed:21740525). Catalyzes the oxidation of 4-guanidinobutanal to 4-guanidinobutanoate (PubMed:20026072).</text>
</comment>
<comment type="catalytic activity">
    <reaction evidence="5 6 7">
        <text>3-aminopropanal + NAD(+) + H2O = beta-alanine + NADH + 2 H(+)</text>
        <dbReference type="Rhea" id="RHEA:30695"/>
        <dbReference type="ChEBI" id="CHEBI:15377"/>
        <dbReference type="ChEBI" id="CHEBI:15378"/>
        <dbReference type="ChEBI" id="CHEBI:57540"/>
        <dbReference type="ChEBI" id="CHEBI:57945"/>
        <dbReference type="ChEBI" id="CHEBI:57966"/>
        <dbReference type="ChEBI" id="CHEBI:58374"/>
    </reaction>
    <physiologicalReaction direction="left-to-right" evidence="5 7">
        <dbReference type="Rhea" id="RHEA:30696"/>
    </physiologicalReaction>
</comment>
<comment type="catalytic activity">
    <reaction evidence="5 6">
        <text>4-aminobutanal + NAD(+) + H2O = 4-aminobutanoate + NADH + 2 H(+)</text>
        <dbReference type="Rhea" id="RHEA:19105"/>
        <dbReference type="ChEBI" id="CHEBI:15377"/>
        <dbReference type="ChEBI" id="CHEBI:15378"/>
        <dbReference type="ChEBI" id="CHEBI:57540"/>
        <dbReference type="ChEBI" id="CHEBI:57945"/>
        <dbReference type="ChEBI" id="CHEBI:58264"/>
        <dbReference type="ChEBI" id="CHEBI:59888"/>
        <dbReference type="EC" id="1.2.1.19"/>
    </reaction>
    <physiologicalReaction direction="left-to-right" evidence="5">
        <dbReference type="Rhea" id="RHEA:19106"/>
    </physiologicalReaction>
</comment>
<comment type="catalytic activity">
    <reaction evidence="5">
        <text>4-guanidinobutanal + NAD(+) + H2O = 4-guanidinobutanoate + NADH + 2 H(+)</text>
        <dbReference type="Rhea" id="RHEA:14381"/>
        <dbReference type="ChEBI" id="CHEBI:15377"/>
        <dbReference type="ChEBI" id="CHEBI:15378"/>
        <dbReference type="ChEBI" id="CHEBI:57486"/>
        <dbReference type="ChEBI" id="CHEBI:57540"/>
        <dbReference type="ChEBI" id="CHEBI:57854"/>
        <dbReference type="ChEBI" id="CHEBI:57945"/>
        <dbReference type="EC" id="1.2.1.54"/>
    </reaction>
    <physiologicalReaction direction="left-to-right" evidence="5">
        <dbReference type="Rhea" id="RHEA:14382"/>
    </physiologicalReaction>
</comment>
<comment type="biophysicochemical properties">
    <kinetics>
        <KM evidence="5">10 uM for 3-aminopropanal</KM>
        <KM evidence="5">29 uM for 4-aminobutanal</KM>
        <KM evidence="5">7 uM for 4-guanidinobutanal</KM>
        <KM evidence="5">55 uM for NAD(+) with 3-aminopropanal as substrate</KM>
        <Vmax evidence="5">190.0 nmol/min/mg enzyme with 3-aminopropanal as substrate</Vmax>
        <Vmax evidence="5">57.0 nmol/min/mg enzyme with 4-aminobutanal as substrate</Vmax>
        <Vmax evidence="5">78.0 nmol/min/mg enzyme with 4-guanidinobutanal as substrate</Vmax>
    </kinetics>
</comment>
<comment type="pathway">
    <text evidence="10">Amine and polyamine biosynthesis; betaine biosynthesis via choline pathway; betaine from betaine aldehyde: step 1/1.</text>
</comment>
<comment type="subunit">
    <text evidence="5">Forms homodimers.</text>
</comment>
<comment type="subcellular location">
    <subcellularLocation>
        <location evidence="2">Peroxisome</location>
    </subcellularLocation>
</comment>
<comment type="similarity">
    <text evidence="10">Belongs to the aldehyde dehydrogenase family.</text>
</comment>